<feature type="chain" id="PRO_1000063657" description="UPF0213 protein RBAM_000440">
    <location>
        <begin position="1"/>
        <end position="99"/>
    </location>
</feature>
<feature type="domain" description="GIY-YIG" evidence="1">
    <location>
        <begin position="4"/>
        <end position="79"/>
    </location>
</feature>
<accession>A7Z0F8</accession>
<evidence type="ECO:0000255" key="1">
    <source>
        <dbReference type="PROSITE-ProRule" id="PRU00977"/>
    </source>
</evidence>
<evidence type="ECO:0000305" key="2"/>
<proteinExistence type="inferred from homology"/>
<sequence>METNSHFFYVLLCNDNSLYAGYTNDLQKRLKTHNEGKGAKYTRARRPVSLCHAESFETKREAMQAEYRFKQLTRKKKEQYIEEKRRSKEAVYVKTPDEF</sequence>
<reference key="1">
    <citation type="journal article" date="2007" name="Nat. Biotechnol.">
        <title>Comparative analysis of the complete genome sequence of the plant growth-promoting bacterium Bacillus amyloliquefaciens FZB42.</title>
        <authorList>
            <person name="Chen X.H."/>
            <person name="Koumoutsi A."/>
            <person name="Scholz R."/>
            <person name="Eisenreich A."/>
            <person name="Schneider K."/>
            <person name="Heinemeyer I."/>
            <person name="Morgenstern B."/>
            <person name="Voss B."/>
            <person name="Hess W.R."/>
            <person name="Reva O."/>
            <person name="Junge H."/>
            <person name="Voigt B."/>
            <person name="Jungblut P.R."/>
            <person name="Vater J."/>
            <person name="Suessmuth R."/>
            <person name="Liesegang H."/>
            <person name="Strittmatter A."/>
            <person name="Gottschalk G."/>
            <person name="Borriss R."/>
        </authorList>
    </citation>
    <scope>NUCLEOTIDE SEQUENCE [LARGE SCALE GENOMIC DNA]</scope>
    <source>
        <strain>DSM 23117 / BGSC 10A6 / LMG 26770 / FZB42</strain>
    </source>
</reference>
<name>Y044_BACVZ</name>
<comment type="similarity">
    <text evidence="2">Belongs to the UPF0213 family.</text>
</comment>
<dbReference type="EMBL" id="CP000560">
    <property type="protein sequence ID" value="ABS72484.1"/>
    <property type="molecule type" value="Genomic_DNA"/>
</dbReference>
<dbReference type="RefSeq" id="WP_007409921.1">
    <property type="nucleotide sequence ID" value="NC_009725.2"/>
</dbReference>
<dbReference type="SMR" id="A7Z0F8"/>
<dbReference type="GeneID" id="93079182"/>
<dbReference type="KEGG" id="bay:RBAM_000440"/>
<dbReference type="HOGENOM" id="CLU_135650_0_3_9"/>
<dbReference type="Proteomes" id="UP000001120">
    <property type="component" value="Chromosome"/>
</dbReference>
<dbReference type="CDD" id="cd10456">
    <property type="entry name" value="GIY-YIG_UPF0213"/>
    <property type="match status" value="1"/>
</dbReference>
<dbReference type="Gene3D" id="3.40.1440.10">
    <property type="entry name" value="GIY-YIG endonuclease"/>
    <property type="match status" value="1"/>
</dbReference>
<dbReference type="InterPro" id="IPR000305">
    <property type="entry name" value="GIY-YIG_endonuc"/>
</dbReference>
<dbReference type="InterPro" id="IPR035901">
    <property type="entry name" value="GIY-YIG_endonuc_sf"/>
</dbReference>
<dbReference type="InterPro" id="IPR050190">
    <property type="entry name" value="UPF0213_domain"/>
</dbReference>
<dbReference type="PANTHER" id="PTHR34477">
    <property type="entry name" value="UPF0213 PROTEIN YHBQ"/>
    <property type="match status" value="1"/>
</dbReference>
<dbReference type="PANTHER" id="PTHR34477:SF1">
    <property type="entry name" value="UPF0213 PROTEIN YHBQ"/>
    <property type="match status" value="1"/>
</dbReference>
<dbReference type="Pfam" id="PF01541">
    <property type="entry name" value="GIY-YIG"/>
    <property type="match status" value="1"/>
</dbReference>
<dbReference type="SMART" id="SM00465">
    <property type="entry name" value="GIYc"/>
    <property type="match status" value="1"/>
</dbReference>
<dbReference type="SUPFAM" id="SSF82771">
    <property type="entry name" value="GIY-YIG endonuclease"/>
    <property type="match status" value="1"/>
</dbReference>
<dbReference type="PROSITE" id="PS50164">
    <property type="entry name" value="GIY_YIG"/>
    <property type="match status" value="1"/>
</dbReference>
<gene>
    <name type="ordered locus">RBAM_000440</name>
</gene>
<protein>
    <recommendedName>
        <fullName>UPF0213 protein RBAM_000440</fullName>
    </recommendedName>
</protein>
<organism>
    <name type="scientific">Bacillus velezensis (strain DSM 23117 / BGSC 10A6 / LMG 26770 / FZB42)</name>
    <name type="common">Bacillus amyloliquefaciens subsp. plantarum</name>
    <dbReference type="NCBI Taxonomy" id="326423"/>
    <lineage>
        <taxon>Bacteria</taxon>
        <taxon>Bacillati</taxon>
        <taxon>Bacillota</taxon>
        <taxon>Bacilli</taxon>
        <taxon>Bacillales</taxon>
        <taxon>Bacillaceae</taxon>
        <taxon>Bacillus</taxon>
        <taxon>Bacillus amyloliquefaciens group</taxon>
    </lineage>
</organism>